<feature type="chain" id="PRO_1000014898" description="Chaperone protein HtpG">
    <location>
        <begin position="1"/>
        <end position="624"/>
    </location>
</feature>
<feature type="region of interest" description="A; substrate-binding" evidence="1">
    <location>
        <begin position="1"/>
        <end position="338"/>
    </location>
</feature>
<feature type="region of interest" description="B" evidence="1">
    <location>
        <begin position="339"/>
        <end position="552"/>
    </location>
</feature>
<feature type="region of interest" description="C" evidence="1">
    <location>
        <begin position="553"/>
        <end position="624"/>
    </location>
</feature>
<proteinExistence type="inferred from homology"/>
<sequence length="624" mass="73125">MNNKNKITHTFQSEVKELLHLMIHSLYSNKEIFLRELISNASDAIEKIRFEKLYSLKKYRENLYTPKIKISIKKDEKKIIISDNGIGMTYKEVIKNLGTIAKSGTKSFLNKIQNIEKKEKNDFIGQFGVGFYSSFIVSNSVSVYTRHAKEKKNIGTLWISEGKGKYSVEKISKEEHGTIVELSLKSSEKEFLEIWKIKNIIKKYSDHISIPIEIENYDEKTKTISWEKINKAQALWTINKNNITKKKYQDFYKYLTNDSEKPLLWSHNKVEGTQEYINLLYIPKKATWDIWHQENKHGLKLYVKHVFIMDEATQFLPNYLRFVKGIIDSQDLPLNISREILQDSSITHILRKSLTKRILNILNNLSENNIKKYQKFWNVFGIIIKEGIAEDSENKTILSNLLRFSSIKKGNIEQTLSLNEYIKNMKKNQKKIYFITSDSYKSALNSPNLEIFKENDIDVLILSEKIDEWMMNYLTEFNNIKFQSVSKLDDTIDSLLLKKNVSNEKNTFNEFIEKTKKILKNKVKDVKITYRLKNTPAIVLTDTNDMSTQMAKIFSAAGQPIPKIKYILEINPLHPLIKKIEKIKNEKDFSNWIKIIFDQSILSEKGSLENPHKFIQRINNFFIS</sequence>
<gene>
    <name evidence="1" type="primary">htpG</name>
    <name type="ordered locus">BCc_302</name>
</gene>
<accession>Q057D9</accession>
<organism>
    <name type="scientific">Buchnera aphidicola subsp. Cinara cedri (strain Cc)</name>
    <dbReference type="NCBI Taxonomy" id="372461"/>
    <lineage>
        <taxon>Bacteria</taxon>
        <taxon>Pseudomonadati</taxon>
        <taxon>Pseudomonadota</taxon>
        <taxon>Gammaproteobacteria</taxon>
        <taxon>Enterobacterales</taxon>
        <taxon>Erwiniaceae</taxon>
        <taxon>Buchnera</taxon>
    </lineage>
</organism>
<keyword id="KW-0067">ATP-binding</keyword>
<keyword id="KW-0143">Chaperone</keyword>
<keyword id="KW-0963">Cytoplasm</keyword>
<keyword id="KW-0547">Nucleotide-binding</keyword>
<keyword id="KW-1185">Reference proteome</keyword>
<keyword id="KW-0346">Stress response</keyword>
<protein>
    <recommendedName>
        <fullName evidence="1">Chaperone protein HtpG</fullName>
    </recommendedName>
    <alternativeName>
        <fullName evidence="1">Heat shock protein HtpG</fullName>
    </alternativeName>
    <alternativeName>
        <fullName evidence="1">High temperature protein G</fullName>
    </alternativeName>
</protein>
<evidence type="ECO:0000255" key="1">
    <source>
        <dbReference type="HAMAP-Rule" id="MF_00505"/>
    </source>
</evidence>
<comment type="function">
    <text evidence="1">Molecular chaperone. Has ATPase activity.</text>
</comment>
<comment type="subunit">
    <text evidence="1">Homodimer.</text>
</comment>
<comment type="subcellular location">
    <subcellularLocation>
        <location evidence="1">Cytoplasm</location>
    </subcellularLocation>
</comment>
<comment type="similarity">
    <text evidence="1">Belongs to the heat shock protein 90 family.</text>
</comment>
<reference key="1">
    <citation type="journal article" date="2006" name="Science">
        <title>A small microbial genome: the end of a long symbiotic relationship?</title>
        <authorList>
            <person name="Perez-Brocal V."/>
            <person name="Gil R."/>
            <person name="Ramos S."/>
            <person name="Lamelas A."/>
            <person name="Postigo M."/>
            <person name="Michelena J.M."/>
            <person name="Silva F.J."/>
            <person name="Moya A."/>
            <person name="Latorre A."/>
        </authorList>
    </citation>
    <scope>NUCLEOTIDE SEQUENCE [LARGE SCALE GENOMIC DNA]</scope>
    <source>
        <strain>Cc</strain>
    </source>
</reference>
<name>HTPG_BUCCC</name>
<dbReference type="EMBL" id="CP000263">
    <property type="protein sequence ID" value="ABJ90760.1"/>
    <property type="molecule type" value="Genomic_DNA"/>
</dbReference>
<dbReference type="RefSeq" id="WP_011672679.1">
    <property type="nucleotide sequence ID" value="NC_008513.1"/>
</dbReference>
<dbReference type="SMR" id="Q057D9"/>
<dbReference type="STRING" id="372461.BCc_302"/>
<dbReference type="KEGG" id="bcc:BCc_302"/>
<dbReference type="eggNOG" id="COG0326">
    <property type="taxonomic scope" value="Bacteria"/>
</dbReference>
<dbReference type="HOGENOM" id="CLU_006684_3_0_6"/>
<dbReference type="OrthoDB" id="9802640at2"/>
<dbReference type="Proteomes" id="UP000000669">
    <property type="component" value="Chromosome"/>
</dbReference>
<dbReference type="GO" id="GO:0005737">
    <property type="term" value="C:cytoplasm"/>
    <property type="evidence" value="ECO:0007669"/>
    <property type="project" value="UniProtKB-SubCell"/>
</dbReference>
<dbReference type="GO" id="GO:0005524">
    <property type="term" value="F:ATP binding"/>
    <property type="evidence" value="ECO:0007669"/>
    <property type="project" value="UniProtKB-UniRule"/>
</dbReference>
<dbReference type="GO" id="GO:0016887">
    <property type="term" value="F:ATP hydrolysis activity"/>
    <property type="evidence" value="ECO:0007669"/>
    <property type="project" value="InterPro"/>
</dbReference>
<dbReference type="GO" id="GO:0140662">
    <property type="term" value="F:ATP-dependent protein folding chaperone"/>
    <property type="evidence" value="ECO:0007669"/>
    <property type="project" value="InterPro"/>
</dbReference>
<dbReference type="GO" id="GO:0051082">
    <property type="term" value="F:unfolded protein binding"/>
    <property type="evidence" value="ECO:0007669"/>
    <property type="project" value="UniProtKB-UniRule"/>
</dbReference>
<dbReference type="CDD" id="cd16927">
    <property type="entry name" value="HATPase_Hsp90-like"/>
    <property type="match status" value="1"/>
</dbReference>
<dbReference type="FunFam" id="3.30.230.80:FF:000002">
    <property type="entry name" value="Molecular chaperone HtpG"/>
    <property type="match status" value="1"/>
</dbReference>
<dbReference type="FunFam" id="3.30.565.10:FF:000009">
    <property type="entry name" value="Molecular chaperone HtpG"/>
    <property type="match status" value="1"/>
</dbReference>
<dbReference type="Gene3D" id="3.30.230.80">
    <property type="match status" value="1"/>
</dbReference>
<dbReference type="Gene3D" id="3.40.50.11260">
    <property type="match status" value="1"/>
</dbReference>
<dbReference type="Gene3D" id="1.20.120.790">
    <property type="entry name" value="Heat shock protein 90, C-terminal domain"/>
    <property type="match status" value="1"/>
</dbReference>
<dbReference type="Gene3D" id="3.30.565.10">
    <property type="entry name" value="Histidine kinase-like ATPase, C-terminal domain"/>
    <property type="match status" value="1"/>
</dbReference>
<dbReference type="HAMAP" id="MF_00505">
    <property type="entry name" value="HSP90"/>
    <property type="match status" value="1"/>
</dbReference>
<dbReference type="InterPro" id="IPR036890">
    <property type="entry name" value="HATPase_C_sf"/>
</dbReference>
<dbReference type="InterPro" id="IPR019805">
    <property type="entry name" value="Heat_shock_protein_90_CS"/>
</dbReference>
<dbReference type="InterPro" id="IPR037196">
    <property type="entry name" value="HSP90_C"/>
</dbReference>
<dbReference type="InterPro" id="IPR001404">
    <property type="entry name" value="Hsp90_fam"/>
</dbReference>
<dbReference type="InterPro" id="IPR020575">
    <property type="entry name" value="Hsp90_N"/>
</dbReference>
<dbReference type="InterPro" id="IPR020568">
    <property type="entry name" value="Ribosomal_Su5_D2-typ_SF"/>
</dbReference>
<dbReference type="NCBIfam" id="NF003555">
    <property type="entry name" value="PRK05218.1"/>
    <property type="match status" value="1"/>
</dbReference>
<dbReference type="PANTHER" id="PTHR11528">
    <property type="entry name" value="HEAT SHOCK PROTEIN 90 FAMILY MEMBER"/>
    <property type="match status" value="1"/>
</dbReference>
<dbReference type="Pfam" id="PF13589">
    <property type="entry name" value="HATPase_c_3"/>
    <property type="match status" value="1"/>
</dbReference>
<dbReference type="Pfam" id="PF00183">
    <property type="entry name" value="HSP90"/>
    <property type="match status" value="1"/>
</dbReference>
<dbReference type="PIRSF" id="PIRSF002583">
    <property type="entry name" value="Hsp90"/>
    <property type="match status" value="1"/>
</dbReference>
<dbReference type="PRINTS" id="PR00775">
    <property type="entry name" value="HEATSHOCK90"/>
</dbReference>
<dbReference type="SUPFAM" id="SSF55874">
    <property type="entry name" value="ATPase domain of HSP90 chaperone/DNA topoisomerase II/histidine kinase"/>
    <property type="match status" value="1"/>
</dbReference>
<dbReference type="SUPFAM" id="SSF110942">
    <property type="entry name" value="HSP90 C-terminal domain"/>
    <property type="match status" value="1"/>
</dbReference>
<dbReference type="SUPFAM" id="SSF54211">
    <property type="entry name" value="Ribosomal protein S5 domain 2-like"/>
    <property type="match status" value="1"/>
</dbReference>
<dbReference type="PROSITE" id="PS00298">
    <property type="entry name" value="HSP90"/>
    <property type="match status" value="1"/>
</dbReference>